<reference key="1">
    <citation type="journal article" date="1990" name="J. Gen. Microbiol.">
        <title>Molecular cloning and nucleotide sequence of a gene for alkaline cellulase from Bacillus sp. KSM-635.</title>
        <authorList>
            <person name="Ozaki K."/>
            <person name="Shikata S."/>
            <person name="Kawai S."/>
            <person name="Ito S."/>
            <person name="Okamoto K."/>
        </authorList>
    </citation>
    <scope>NUCLEOTIDE SEQUENCE [GENOMIC DNA]</scope>
</reference>
<reference key="2">
    <citation type="journal article" date="1997" name="J. Biochem.">
        <title>Crystallization and preliminary X-ray analysis of a truncated family A alkaline endoglucanase isolated from Bacillus sp. KSM-635.</title>
        <authorList>
            <person name="Shirai T."/>
            <person name="Yamane T."/>
            <person name="Hidaka T."/>
            <person name="Kuyama K."/>
            <person name="Suzuki A."/>
            <person name="Ashida T."/>
            <person name="Ozaki K."/>
            <person name="Ito S."/>
        </authorList>
    </citation>
    <scope>PROTEIN SEQUENCE OF 228-584</scope>
    <scope>CRYSTALLIZATION</scope>
</reference>
<reference key="3">
    <citation type="journal article" date="2001" name="J. Mol. Biol.">
        <title>Crystal structure of alkaline cellulase K: insight into the alkaline adaptation of an industrial enzyme.</title>
        <authorList>
            <person name="Shirai T."/>
            <person name="Ishida H."/>
            <person name="Noda J."/>
            <person name="Yamane T."/>
            <person name="Ozaki K."/>
            <person name="Hakamada Y."/>
            <person name="Ito S."/>
        </authorList>
    </citation>
    <scope>X-RAY CRYSTALLOGRAPHY (1.9 ANGSTROMS) OF 221-584</scope>
</reference>
<organism>
    <name type="scientific">Bacillus sp. (strain KSM-635)</name>
    <dbReference type="NCBI Taxonomy" id="1415"/>
    <lineage>
        <taxon>Bacteria</taxon>
        <taxon>Bacillati</taxon>
        <taxon>Bacillota</taxon>
        <taxon>Bacilli</taxon>
        <taxon>Bacillales</taxon>
        <taxon>Bacillaceae</taxon>
        <taxon>Bacillus</taxon>
    </lineage>
</organism>
<name>GUN_BACS6</name>
<sequence>MKIKQIKQSLSLLLIITLIMSLFVPMASANTNESKSNAFPFSDVKKTSWSFPYIKDLYEQEVITGTSATTFSPTDSVTRAQFTVMLTRGLGLEASSKDYPFKDRKNWAYKEIQAAYEAGIVTGKTNGEFAPNENITREQMAAMAVRAYEYLENELSLPEEQREYNDSSSISTFAQDAVQKAYVLELMEGNTDGYFQPKRNSTREQSAKVISTLLWKVASHDYLYHTEAVKSPSEAGALQLVELNGQLTLAGEDGTPVQLRGMSTHGLQWFGEIVNENAFVALSNDWGSNMIRLAMYIGENGYATNPEVKDLVYEGIELAFEHDMYVIVDWHVHAPGDPRADVYSGAYDFFEEIADHYKDHPKNHYIIWELANEPSPNNNGGPGLTNDEKGWEAVKEYAEPIVEMLREKGDNMILVGNPNWSQRPDLSADNPIDAENIMYSVHFYTGSHGASHIGYPEGTPSSERSNVMANVRYALDNGVAVFATEWGTSQANGDGGPYFDEADVWLNFLNKHNISWANWSLTNKNEISGAFTPFELGRTDATDLDPGANQVWAPEELSLSGEYVRARIKGIEYTPIDRTKFTKLVWDFNDGTTQGFQVNGDSPNKESITLSNNNDALQIEGLNVSNDISEGNYWDNVRLSADGWSENVDILGATELTIDVIVEEPTTVSIAAIPQGPAAGWANPTRAIKVTEDDFESFGDGYKALVTITSEDSPSLETIATSPEDNTMSNIILFVGTEDADVISLDNITVSGTEIEIEVIHDEKGTATLPSTFEDGTRQGWDWHTESGVKTALTIEEANGSNALSWEYAYPEVKPSDGWATAPRLDFWKDELVRGTSDYISFDFYIDAVRASEGAISINAVFQPPANGYWQEVPTTFEIDLTELDSATVTSDELYHYEVKINIRDIEAITDDTELRNLLLIFADEDSDFAGRVFVDNVRFE</sequence>
<keyword id="KW-0002">3D-structure</keyword>
<keyword id="KW-0119">Carbohydrate metabolism</keyword>
<keyword id="KW-0136">Cellulose degradation</keyword>
<keyword id="KW-0903">Direct protein sequencing</keyword>
<keyword id="KW-0326">Glycosidase</keyword>
<keyword id="KW-0378">Hydrolase</keyword>
<keyword id="KW-0624">Polysaccharide degradation</keyword>
<keyword id="KW-0677">Repeat</keyword>
<keyword id="KW-0732">Signal</keyword>
<feature type="signal peptide">
    <location>
        <begin position="1"/>
        <end position="29"/>
    </location>
</feature>
<feature type="chain" id="PRO_0000007838" description="Endoglucanase">
    <location>
        <begin position="30"/>
        <end position="941"/>
    </location>
</feature>
<feature type="domain" description="SLH 1" evidence="1">
    <location>
        <begin position="37"/>
        <end position="94"/>
    </location>
</feature>
<feature type="domain" description="SLH 2" evidence="1">
    <location>
        <begin position="95"/>
        <end position="158"/>
    </location>
</feature>
<feature type="domain" description="SLH 3" evidence="1">
    <location>
        <begin position="161"/>
        <end position="224"/>
    </location>
</feature>
<feature type="active site" description="Proton donor">
    <location>
        <position position="373"/>
    </location>
</feature>
<feature type="active site" description="Nucleophile">
    <location>
        <position position="485"/>
    </location>
</feature>
<feature type="helix" evidence="3">
    <location>
        <begin position="232"/>
        <end position="235"/>
    </location>
</feature>
<feature type="strand" evidence="3">
    <location>
        <begin position="239"/>
        <end position="243"/>
    </location>
</feature>
<feature type="strand" evidence="3">
    <location>
        <begin position="246"/>
        <end position="250"/>
    </location>
</feature>
<feature type="strand" evidence="4">
    <location>
        <begin position="254"/>
        <end position="256"/>
    </location>
</feature>
<feature type="strand" evidence="3">
    <location>
        <begin position="260"/>
        <end position="265"/>
    </location>
</feature>
<feature type="helix" evidence="3">
    <location>
        <begin position="267"/>
        <end position="270"/>
    </location>
</feature>
<feature type="helix" evidence="3">
    <location>
        <begin position="271"/>
        <end position="273"/>
    </location>
</feature>
<feature type="helix" evidence="3">
    <location>
        <begin position="276"/>
        <end position="283"/>
    </location>
</feature>
<feature type="strand" evidence="3">
    <location>
        <begin position="289"/>
        <end position="301"/>
    </location>
</feature>
<feature type="turn" evidence="3">
    <location>
        <begin position="302"/>
        <end position="304"/>
    </location>
</feature>
<feature type="helix" evidence="3">
    <location>
        <begin position="308"/>
        <end position="321"/>
    </location>
</feature>
<feature type="strand" evidence="3">
    <location>
        <begin position="325"/>
        <end position="331"/>
    </location>
</feature>
<feature type="strand" evidence="3">
    <location>
        <begin position="334"/>
        <end position="336"/>
    </location>
</feature>
<feature type="helix" evidence="3">
    <location>
        <begin position="341"/>
        <end position="343"/>
    </location>
</feature>
<feature type="helix" evidence="3">
    <location>
        <begin position="346"/>
        <end position="357"/>
    </location>
</feature>
<feature type="helix" evidence="3">
    <location>
        <begin position="363"/>
        <end position="365"/>
    </location>
</feature>
<feature type="strand" evidence="3">
    <location>
        <begin position="366"/>
        <end position="369"/>
    </location>
</feature>
<feature type="helix" evidence="3">
    <location>
        <begin position="388"/>
        <end position="408"/>
    </location>
</feature>
<feature type="strand" evidence="3">
    <location>
        <begin position="413"/>
        <end position="415"/>
    </location>
</feature>
<feature type="helix" evidence="3">
    <location>
        <begin position="418"/>
        <end position="421"/>
    </location>
</feature>
<feature type="helix" evidence="3">
    <location>
        <begin position="424"/>
        <end position="429"/>
    </location>
</feature>
<feature type="strand" evidence="3">
    <location>
        <begin position="433"/>
        <end position="444"/>
    </location>
</feature>
<feature type="turn" evidence="3">
    <location>
        <begin position="445"/>
        <end position="447"/>
    </location>
</feature>
<feature type="helix" evidence="3">
    <location>
        <begin position="461"/>
        <end position="463"/>
    </location>
</feature>
<feature type="helix" evidence="3">
    <location>
        <begin position="467"/>
        <end position="476"/>
    </location>
</feature>
<feature type="strand" evidence="3">
    <location>
        <begin position="481"/>
        <end position="490"/>
    </location>
</feature>
<feature type="turn" evidence="3">
    <location>
        <begin position="491"/>
        <end position="493"/>
    </location>
</feature>
<feature type="helix" evidence="3">
    <location>
        <begin position="499"/>
        <end position="511"/>
    </location>
</feature>
<feature type="strand" evidence="3">
    <location>
        <begin position="516"/>
        <end position="521"/>
    </location>
</feature>
<feature type="strand" evidence="3">
    <location>
        <begin position="524"/>
        <end position="526"/>
    </location>
</feature>
<feature type="turn" evidence="4">
    <location>
        <begin position="536"/>
        <end position="538"/>
    </location>
</feature>
<feature type="helix" evidence="3">
    <location>
        <begin position="554"/>
        <end position="556"/>
    </location>
</feature>
<feature type="helix" evidence="3">
    <location>
        <begin position="559"/>
        <end position="569"/>
    </location>
</feature>
<protein>
    <recommendedName>
        <fullName>Endoglucanase</fullName>
        <ecNumber>3.2.1.4</ecNumber>
    </recommendedName>
    <alternativeName>
        <fullName>Alkaline cellulase</fullName>
    </alternativeName>
    <alternativeName>
        <fullName>Endo-1,4-beta-glucanase</fullName>
    </alternativeName>
</protein>
<dbReference type="EC" id="3.2.1.4"/>
<dbReference type="EMBL" id="M27420">
    <property type="protein sequence ID" value="AAA22304.1"/>
    <property type="molecule type" value="Genomic_DNA"/>
</dbReference>
<dbReference type="PIR" id="S29043">
    <property type="entry name" value="S29043"/>
</dbReference>
<dbReference type="PDB" id="1G01">
    <property type="method" value="X-ray"/>
    <property type="resolution" value="1.90 A"/>
    <property type="chains" value="A=228-584"/>
</dbReference>
<dbReference type="PDB" id="1G0C">
    <property type="method" value="X-ray"/>
    <property type="resolution" value="1.90 A"/>
    <property type="chains" value="A=228-584"/>
</dbReference>
<dbReference type="PDBsum" id="1G01"/>
<dbReference type="PDBsum" id="1G0C"/>
<dbReference type="SMR" id="P19424"/>
<dbReference type="DrugBank" id="DB02061">
    <property type="generic name" value="Cellobiose"/>
</dbReference>
<dbReference type="CAZy" id="CBM17">
    <property type="family name" value="Carbohydrate-Binding Module Family 17"/>
</dbReference>
<dbReference type="CAZy" id="CBM28">
    <property type="family name" value="Carbohydrate-Binding Module Family 28"/>
</dbReference>
<dbReference type="CAZy" id="GH5">
    <property type="family name" value="Glycoside Hydrolase Family 5"/>
</dbReference>
<dbReference type="EvolutionaryTrace" id="P19424"/>
<dbReference type="GO" id="GO:0008810">
    <property type="term" value="F:cellulase activity"/>
    <property type="evidence" value="ECO:0007669"/>
    <property type="project" value="UniProtKB-EC"/>
</dbReference>
<dbReference type="GO" id="GO:0030245">
    <property type="term" value="P:cellulose catabolic process"/>
    <property type="evidence" value="ECO:0007669"/>
    <property type="project" value="UniProtKB-KW"/>
</dbReference>
<dbReference type="Gene3D" id="2.60.120.260">
    <property type="entry name" value="Galactose-binding domain-like"/>
    <property type="match status" value="2"/>
</dbReference>
<dbReference type="Gene3D" id="3.20.20.80">
    <property type="entry name" value="Glycosidases"/>
    <property type="match status" value="1"/>
</dbReference>
<dbReference type="InterPro" id="IPR005086">
    <property type="entry name" value="CBM17/28"/>
</dbReference>
<dbReference type="InterPro" id="IPR051465">
    <property type="entry name" value="Cell_Envelope_Struct_Comp"/>
</dbReference>
<dbReference type="InterPro" id="IPR008979">
    <property type="entry name" value="Galactose-bd-like_sf"/>
</dbReference>
<dbReference type="InterPro" id="IPR001547">
    <property type="entry name" value="Glyco_hydro_5"/>
</dbReference>
<dbReference type="InterPro" id="IPR018087">
    <property type="entry name" value="Glyco_hydro_5_CS"/>
</dbReference>
<dbReference type="InterPro" id="IPR017853">
    <property type="entry name" value="Glycoside_hydrolase_SF"/>
</dbReference>
<dbReference type="InterPro" id="IPR001119">
    <property type="entry name" value="SLH_dom"/>
</dbReference>
<dbReference type="PANTHER" id="PTHR43308">
    <property type="entry name" value="OUTER MEMBRANE PROTEIN ALPHA-RELATED"/>
    <property type="match status" value="1"/>
</dbReference>
<dbReference type="PANTHER" id="PTHR43308:SF5">
    <property type="entry name" value="S-LAYER PROTEIN _ PEPTIDOGLYCAN ENDO-BETA-N-ACETYLGLUCOSAMINIDASE"/>
    <property type="match status" value="1"/>
</dbReference>
<dbReference type="Pfam" id="PF03424">
    <property type="entry name" value="CBM_17_28"/>
    <property type="match status" value="2"/>
</dbReference>
<dbReference type="Pfam" id="PF00150">
    <property type="entry name" value="Cellulase"/>
    <property type="match status" value="1"/>
</dbReference>
<dbReference type="Pfam" id="PF00395">
    <property type="entry name" value="SLH"/>
    <property type="match status" value="3"/>
</dbReference>
<dbReference type="SUPFAM" id="SSF51445">
    <property type="entry name" value="(Trans)glycosidases"/>
    <property type="match status" value="1"/>
</dbReference>
<dbReference type="SUPFAM" id="SSF49785">
    <property type="entry name" value="Galactose-binding domain-like"/>
    <property type="match status" value="2"/>
</dbReference>
<dbReference type="PROSITE" id="PS00659">
    <property type="entry name" value="GLYCOSYL_HYDROL_F5"/>
    <property type="match status" value="1"/>
</dbReference>
<dbReference type="PROSITE" id="PS51272">
    <property type="entry name" value="SLH"/>
    <property type="match status" value="3"/>
</dbReference>
<accession>P19424</accession>
<evidence type="ECO:0000255" key="1">
    <source>
        <dbReference type="PROSITE-ProRule" id="PRU00777"/>
    </source>
</evidence>
<evidence type="ECO:0000305" key="2"/>
<evidence type="ECO:0007829" key="3">
    <source>
        <dbReference type="PDB" id="1G01"/>
    </source>
</evidence>
<evidence type="ECO:0007829" key="4">
    <source>
        <dbReference type="PDB" id="1G0C"/>
    </source>
</evidence>
<comment type="catalytic activity">
    <reaction>
        <text>Endohydrolysis of (1-&gt;4)-beta-D-glucosidic linkages in cellulose, lichenin and cereal beta-D-glucans.</text>
        <dbReference type="EC" id="3.2.1.4"/>
    </reaction>
</comment>
<comment type="similarity">
    <text evidence="2">Belongs to the glycosyl hydrolase 5 (cellulase A) family.</text>
</comment>
<proteinExistence type="evidence at protein level"/>